<name>IF2_MESFL</name>
<reference key="1">
    <citation type="submission" date="2004-06" db="EMBL/GenBank/DDBJ databases">
        <authorList>
            <person name="Birren B.W."/>
            <person name="Stange-Thomann N."/>
            <person name="Hafez N."/>
            <person name="DeCaprio D."/>
            <person name="Fisher S."/>
            <person name="Butler J."/>
            <person name="Elkins T."/>
            <person name="Kodira C.D."/>
            <person name="Major J."/>
            <person name="Wang S."/>
            <person name="Nicol R."/>
            <person name="Nusbaum C."/>
        </authorList>
    </citation>
    <scope>NUCLEOTIDE SEQUENCE [LARGE SCALE GENOMIC DNA]</scope>
    <source>
        <strain>ATCC 33453 / NBRC 100688 / NCTC 11704 / L1</strain>
    </source>
</reference>
<organism>
    <name type="scientific">Mesoplasma florum (strain ATCC 33453 / NBRC 100688 / NCTC 11704 / L1)</name>
    <name type="common">Acholeplasma florum</name>
    <dbReference type="NCBI Taxonomy" id="265311"/>
    <lineage>
        <taxon>Bacteria</taxon>
        <taxon>Bacillati</taxon>
        <taxon>Mycoplasmatota</taxon>
        <taxon>Mollicutes</taxon>
        <taxon>Entomoplasmatales</taxon>
        <taxon>Entomoplasmataceae</taxon>
        <taxon>Mesoplasma</taxon>
    </lineage>
</organism>
<sequence>MAKNIKTNKKPQQVNKKEMSKQHAKQIKQQLNETVATGIIDGVFVYTEALSIADFANQIGKSVAEILKYFFAQGLMLNQNVVLSEEQMAELALEFGFDFRKEESLTKENFFEALDASEEDKPEDLEHRAPIVTIMGHVDHGKTTLLDSIKNTNVVGGEAGGITQAIGAYQVKNKDGKKITFIDTPGHEAFSEMRSRGANVTDIVILIVAADDGVMPQTEEAIDHAKLANVPIIVFINKCDKPGADPERVKAELMKYEIVAEEYGGDIPFVQGSAKQKIGLDQLEETILLIAEMQDYKANPNKLAKGVVIEAHLDKAKGPVASILVKEGTLDIRDMIIAGTTYGNIKHMEDETNKKVLKAGPSKPVVVYGLNEVPSAGDKFIVMNDEKMARTIAEAQAEKKLAAERQSNQIFSLDSIKKHIDDGELKAINLIVKADTQGSVEALKGSLTKIDIPGVKLNIIRASVGTITLSDVTLASTVTDGIVLIYGFNVRPDAVVRKKAEEEGIEIRLHNIIYKVIEELEDAAKGMLDPEYKEVVTGSAEIRATFKHSDIGTIGGFHITDGSIERKSKVRIIRNGIVIYTGELATLKHLKDDIKEAKINSEGGLTIKNFNDIKEGDIVEGYKEEEVKK</sequence>
<keyword id="KW-0963">Cytoplasm</keyword>
<keyword id="KW-0342">GTP-binding</keyword>
<keyword id="KW-0396">Initiation factor</keyword>
<keyword id="KW-0547">Nucleotide-binding</keyword>
<keyword id="KW-0648">Protein biosynthesis</keyword>
<keyword id="KW-1185">Reference proteome</keyword>
<accession>Q6F1H1</accession>
<gene>
    <name evidence="2" type="primary">infB</name>
    <name type="ordered locus">Mfl295</name>
</gene>
<proteinExistence type="inferred from homology"/>
<evidence type="ECO:0000250" key="1"/>
<evidence type="ECO:0000255" key="2">
    <source>
        <dbReference type="HAMAP-Rule" id="MF_00100"/>
    </source>
</evidence>
<evidence type="ECO:0000256" key="3">
    <source>
        <dbReference type="SAM" id="MobiDB-lite"/>
    </source>
</evidence>
<protein>
    <recommendedName>
        <fullName evidence="2">Translation initiation factor IF-2</fullName>
    </recommendedName>
</protein>
<feature type="chain" id="PRO_0000228212" description="Translation initiation factor IF-2">
    <location>
        <begin position="1"/>
        <end position="629"/>
    </location>
</feature>
<feature type="domain" description="tr-type G">
    <location>
        <begin position="127"/>
        <end position="297"/>
    </location>
</feature>
<feature type="region of interest" description="Disordered" evidence="3">
    <location>
        <begin position="1"/>
        <end position="20"/>
    </location>
</feature>
<feature type="region of interest" description="G1" evidence="1">
    <location>
        <begin position="136"/>
        <end position="143"/>
    </location>
</feature>
<feature type="region of interest" description="G2" evidence="1">
    <location>
        <begin position="161"/>
        <end position="165"/>
    </location>
</feature>
<feature type="region of interest" description="G3" evidence="1">
    <location>
        <begin position="183"/>
        <end position="186"/>
    </location>
</feature>
<feature type="region of interest" description="G4" evidence="1">
    <location>
        <begin position="237"/>
        <end position="240"/>
    </location>
</feature>
<feature type="region of interest" description="G5" evidence="1">
    <location>
        <begin position="273"/>
        <end position="275"/>
    </location>
</feature>
<feature type="binding site" evidence="2">
    <location>
        <begin position="136"/>
        <end position="143"/>
    </location>
    <ligand>
        <name>GTP</name>
        <dbReference type="ChEBI" id="CHEBI:37565"/>
    </ligand>
</feature>
<feature type="binding site" evidence="2">
    <location>
        <begin position="183"/>
        <end position="187"/>
    </location>
    <ligand>
        <name>GTP</name>
        <dbReference type="ChEBI" id="CHEBI:37565"/>
    </ligand>
</feature>
<feature type="binding site" evidence="2">
    <location>
        <begin position="237"/>
        <end position="240"/>
    </location>
    <ligand>
        <name>GTP</name>
        <dbReference type="ChEBI" id="CHEBI:37565"/>
    </ligand>
</feature>
<comment type="function">
    <text evidence="2">One of the essential components for the initiation of protein synthesis. Protects formylmethionyl-tRNA from spontaneous hydrolysis and promotes its binding to the 30S ribosomal subunits. Also involved in the hydrolysis of GTP during the formation of the 70S ribosomal complex.</text>
</comment>
<comment type="subcellular location">
    <subcellularLocation>
        <location evidence="2">Cytoplasm</location>
    </subcellularLocation>
</comment>
<comment type="similarity">
    <text evidence="2">Belongs to the TRAFAC class translation factor GTPase superfamily. Classic translation factor GTPase family. IF-2 subfamily.</text>
</comment>
<dbReference type="EMBL" id="AE017263">
    <property type="protein sequence ID" value="AAT75652.1"/>
    <property type="molecule type" value="Genomic_DNA"/>
</dbReference>
<dbReference type="RefSeq" id="WP_011183192.1">
    <property type="nucleotide sequence ID" value="NC_006055.1"/>
</dbReference>
<dbReference type="RefSeq" id="YP_053536.1">
    <property type="nucleotide sequence ID" value="NC_006055.1"/>
</dbReference>
<dbReference type="SMR" id="Q6F1H1"/>
<dbReference type="STRING" id="265311.Mfl295"/>
<dbReference type="PaxDb" id="265311-Mfl295"/>
<dbReference type="EnsemblBacteria" id="AAT75652">
    <property type="protein sequence ID" value="AAT75652"/>
    <property type="gene ID" value="Mfl295"/>
</dbReference>
<dbReference type="GeneID" id="2898273"/>
<dbReference type="KEGG" id="mfl:Mfl295"/>
<dbReference type="PATRIC" id="fig|265311.5.peg.295"/>
<dbReference type="eggNOG" id="COG0532">
    <property type="taxonomic scope" value="Bacteria"/>
</dbReference>
<dbReference type="HOGENOM" id="CLU_006301_5_1_14"/>
<dbReference type="OrthoDB" id="9811804at2"/>
<dbReference type="Proteomes" id="UP000006647">
    <property type="component" value="Chromosome"/>
</dbReference>
<dbReference type="GO" id="GO:0005829">
    <property type="term" value="C:cytosol"/>
    <property type="evidence" value="ECO:0007669"/>
    <property type="project" value="TreeGrafter"/>
</dbReference>
<dbReference type="GO" id="GO:0005525">
    <property type="term" value="F:GTP binding"/>
    <property type="evidence" value="ECO:0007669"/>
    <property type="project" value="UniProtKB-KW"/>
</dbReference>
<dbReference type="GO" id="GO:0003924">
    <property type="term" value="F:GTPase activity"/>
    <property type="evidence" value="ECO:0007669"/>
    <property type="project" value="UniProtKB-UniRule"/>
</dbReference>
<dbReference type="GO" id="GO:0003743">
    <property type="term" value="F:translation initiation factor activity"/>
    <property type="evidence" value="ECO:0007669"/>
    <property type="project" value="UniProtKB-UniRule"/>
</dbReference>
<dbReference type="CDD" id="cd01887">
    <property type="entry name" value="IF2_eIF5B"/>
    <property type="match status" value="1"/>
</dbReference>
<dbReference type="CDD" id="cd03702">
    <property type="entry name" value="IF2_mtIF2_II"/>
    <property type="match status" value="1"/>
</dbReference>
<dbReference type="CDD" id="cd03692">
    <property type="entry name" value="mtIF2_IVc"/>
    <property type="match status" value="1"/>
</dbReference>
<dbReference type="FunFam" id="2.40.30.10:FF:000007">
    <property type="entry name" value="Translation initiation factor IF-2"/>
    <property type="match status" value="1"/>
</dbReference>
<dbReference type="FunFam" id="2.40.30.10:FF:000008">
    <property type="entry name" value="Translation initiation factor IF-2"/>
    <property type="match status" value="1"/>
</dbReference>
<dbReference type="FunFam" id="3.40.50.10050:FF:000001">
    <property type="entry name" value="Translation initiation factor IF-2"/>
    <property type="match status" value="1"/>
</dbReference>
<dbReference type="FunFam" id="3.40.50.300:FF:000019">
    <property type="entry name" value="Translation initiation factor IF-2"/>
    <property type="match status" value="1"/>
</dbReference>
<dbReference type="Gene3D" id="3.40.50.300">
    <property type="entry name" value="P-loop containing nucleotide triphosphate hydrolases"/>
    <property type="match status" value="1"/>
</dbReference>
<dbReference type="Gene3D" id="2.40.30.10">
    <property type="entry name" value="Translation factors"/>
    <property type="match status" value="2"/>
</dbReference>
<dbReference type="Gene3D" id="3.40.50.10050">
    <property type="entry name" value="Translation initiation factor IF- 2, domain 3"/>
    <property type="match status" value="1"/>
</dbReference>
<dbReference type="HAMAP" id="MF_00100_B">
    <property type="entry name" value="IF_2_B"/>
    <property type="match status" value="1"/>
</dbReference>
<dbReference type="InterPro" id="IPR053905">
    <property type="entry name" value="EF-G-like_DII"/>
</dbReference>
<dbReference type="InterPro" id="IPR044145">
    <property type="entry name" value="IF2_II"/>
</dbReference>
<dbReference type="InterPro" id="IPR006847">
    <property type="entry name" value="IF2_N"/>
</dbReference>
<dbReference type="InterPro" id="IPR027417">
    <property type="entry name" value="P-loop_NTPase"/>
</dbReference>
<dbReference type="InterPro" id="IPR005225">
    <property type="entry name" value="Small_GTP-bd"/>
</dbReference>
<dbReference type="InterPro" id="IPR000795">
    <property type="entry name" value="T_Tr_GTP-bd_dom"/>
</dbReference>
<dbReference type="InterPro" id="IPR000178">
    <property type="entry name" value="TF_IF2_bacterial-like"/>
</dbReference>
<dbReference type="InterPro" id="IPR015760">
    <property type="entry name" value="TIF_IF2"/>
</dbReference>
<dbReference type="InterPro" id="IPR023115">
    <property type="entry name" value="TIF_IF2_dom3"/>
</dbReference>
<dbReference type="InterPro" id="IPR036925">
    <property type="entry name" value="TIF_IF2_dom3_sf"/>
</dbReference>
<dbReference type="InterPro" id="IPR009000">
    <property type="entry name" value="Transl_B-barrel_sf"/>
</dbReference>
<dbReference type="NCBIfam" id="TIGR00487">
    <property type="entry name" value="IF-2"/>
    <property type="match status" value="1"/>
</dbReference>
<dbReference type="NCBIfam" id="TIGR00231">
    <property type="entry name" value="small_GTP"/>
    <property type="match status" value="1"/>
</dbReference>
<dbReference type="PANTHER" id="PTHR43381:SF5">
    <property type="entry name" value="TR-TYPE G DOMAIN-CONTAINING PROTEIN"/>
    <property type="match status" value="1"/>
</dbReference>
<dbReference type="PANTHER" id="PTHR43381">
    <property type="entry name" value="TRANSLATION INITIATION FACTOR IF-2-RELATED"/>
    <property type="match status" value="1"/>
</dbReference>
<dbReference type="Pfam" id="PF22042">
    <property type="entry name" value="EF-G_D2"/>
    <property type="match status" value="1"/>
</dbReference>
<dbReference type="Pfam" id="PF00009">
    <property type="entry name" value="GTP_EFTU"/>
    <property type="match status" value="1"/>
</dbReference>
<dbReference type="Pfam" id="PF11987">
    <property type="entry name" value="IF-2"/>
    <property type="match status" value="1"/>
</dbReference>
<dbReference type="Pfam" id="PF04760">
    <property type="entry name" value="IF2_N"/>
    <property type="match status" value="1"/>
</dbReference>
<dbReference type="SUPFAM" id="SSF52156">
    <property type="entry name" value="Initiation factor IF2/eIF5b, domain 3"/>
    <property type="match status" value="1"/>
</dbReference>
<dbReference type="SUPFAM" id="SSF52540">
    <property type="entry name" value="P-loop containing nucleoside triphosphate hydrolases"/>
    <property type="match status" value="1"/>
</dbReference>
<dbReference type="SUPFAM" id="SSF50447">
    <property type="entry name" value="Translation proteins"/>
    <property type="match status" value="2"/>
</dbReference>
<dbReference type="PROSITE" id="PS51722">
    <property type="entry name" value="G_TR_2"/>
    <property type="match status" value="1"/>
</dbReference>